<proteinExistence type="inferred from homology"/>
<protein>
    <recommendedName>
        <fullName evidence="1">Homoserine O-acetyltransferase</fullName>
        <shortName evidence="1">HAT</shortName>
        <ecNumber evidence="1">2.3.1.31</ecNumber>
    </recommendedName>
    <alternativeName>
        <fullName evidence="1">Homoserine transacetylase</fullName>
        <shortName evidence="1">HTA</shortName>
    </alternativeName>
</protein>
<dbReference type="EC" id="2.3.1.31" evidence="1"/>
<dbReference type="EMBL" id="BA000012">
    <property type="protein sequence ID" value="BAB50407.1"/>
    <property type="molecule type" value="Genomic_DNA"/>
</dbReference>
<dbReference type="SMR" id="Q98G09"/>
<dbReference type="ESTHER" id="meslo-MLR3538">
    <property type="family name" value="Homoserine_transacetylase"/>
</dbReference>
<dbReference type="KEGG" id="mlo:mlr3538"/>
<dbReference type="eggNOG" id="COG2021">
    <property type="taxonomic scope" value="Bacteria"/>
</dbReference>
<dbReference type="HOGENOM" id="CLU_028760_1_2_5"/>
<dbReference type="UniPathway" id="UPA00051">
    <property type="reaction ID" value="UER00074"/>
</dbReference>
<dbReference type="Proteomes" id="UP000000552">
    <property type="component" value="Chromosome"/>
</dbReference>
<dbReference type="GO" id="GO:0005737">
    <property type="term" value="C:cytoplasm"/>
    <property type="evidence" value="ECO:0007669"/>
    <property type="project" value="UniProtKB-SubCell"/>
</dbReference>
<dbReference type="GO" id="GO:0004414">
    <property type="term" value="F:homoserine O-acetyltransferase activity"/>
    <property type="evidence" value="ECO:0007669"/>
    <property type="project" value="UniProtKB-UniRule"/>
</dbReference>
<dbReference type="GO" id="GO:0009092">
    <property type="term" value="P:homoserine metabolic process"/>
    <property type="evidence" value="ECO:0007669"/>
    <property type="project" value="TreeGrafter"/>
</dbReference>
<dbReference type="GO" id="GO:0009086">
    <property type="term" value="P:methionine biosynthetic process"/>
    <property type="evidence" value="ECO:0007669"/>
    <property type="project" value="UniProtKB-UniRule"/>
</dbReference>
<dbReference type="FunFam" id="1.10.1740.110:FF:000001">
    <property type="entry name" value="Homoserine O-acetyltransferase"/>
    <property type="match status" value="1"/>
</dbReference>
<dbReference type="Gene3D" id="1.10.1740.110">
    <property type="match status" value="1"/>
</dbReference>
<dbReference type="Gene3D" id="3.40.50.1820">
    <property type="entry name" value="alpha/beta hydrolase"/>
    <property type="match status" value="1"/>
</dbReference>
<dbReference type="HAMAP" id="MF_00296">
    <property type="entry name" value="MetX_acyltransf"/>
    <property type="match status" value="1"/>
</dbReference>
<dbReference type="InterPro" id="IPR000073">
    <property type="entry name" value="AB_hydrolase_1"/>
</dbReference>
<dbReference type="InterPro" id="IPR029058">
    <property type="entry name" value="AB_hydrolase_fold"/>
</dbReference>
<dbReference type="InterPro" id="IPR008220">
    <property type="entry name" value="HAT_MetX-like"/>
</dbReference>
<dbReference type="NCBIfam" id="TIGR01392">
    <property type="entry name" value="homoserO_Ac_trn"/>
    <property type="match status" value="1"/>
</dbReference>
<dbReference type="NCBIfam" id="NF001209">
    <property type="entry name" value="PRK00175.1"/>
    <property type="match status" value="1"/>
</dbReference>
<dbReference type="PANTHER" id="PTHR32268">
    <property type="entry name" value="HOMOSERINE O-ACETYLTRANSFERASE"/>
    <property type="match status" value="1"/>
</dbReference>
<dbReference type="PANTHER" id="PTHR32268:SF11">
    <property type="entry name" value="HOMOSERINE O-ACETYLTRANSFERASE"/>
    <property type="match status" value="1"/>
</dbReference>
<dbReference type="Pfam" id="PF00561">
    <property type="entry name" value="Abhydrolase_1"/>
    <property type="match status" value="1"/>
</dbReference>
<dbReference type="PIRSF" id="PIRSF000443">
    <property type="entry name" value="Homoser_Ac_trans"/>
    <property type="match status" value="1"/>
</dbReference>
<dbReference type="SUPFAM" id="SSF53474">
    <property type="entry name" value="alpha/beta-Hydrolases"/>
    <property type="match status" value="1"/>
</dbReference>
<reference key="1">
    <citation type="journal article" date="2000" name="DNA Res.">
        <title>Complete genome structure of the nitrogen-fixing symbiotic bacterium Mesorhizobium loti.</title>
        <authorList>
            <person name="Kaneko T."/>
            <person name="Nakamura Y."/>
            <person name="Sato S."/>
            <person name="Asamizu E."/>
            <person name="Kato T."/>
            <person name="Sasamoto S."/>
            <person name="Watanabe A."/>
            <person name="Idesawa K."/>
            <person name="Ishikawa A."/>
            <person name="Kawashima K."/>
            <person name="Kimura T."/>
            <person name="Kishida Y."/>
            <person name="Kiyokawa C."/>
            <person name="Kohara M."/>
            <person name="Matsumoto M."/>
            <person name="Matsuno A."/>
            <person name="Mochizuki Y."/>
            <person name="Nakayama S."/>
            <person name="Nakazaki N."/>
            <person name="Shimpo S."/>
            <person name="Sugimoto M."/>
            <person name="Takeuchi C."/>
            <person name="Yamada M."/>
            <person name="Tabata S."/>
        </authorList>
    </citation>
    <scope>NUCLEOTIDE SEQUENCE [LARGE SCALE GENOMIC DNA]</scope>
    <source>
        <strain>LMG 29417 / CECT 9101 / MAFF 303099</strain>
    </source>
</reference>
<comment type="function">
    <text evidence="1">Transfers an acetyl group from acetyl-CoA to L-homoserine, forming acetyl-L-homoserine.</text>
</comment>
<comment type="catalytic activity">
    <reaction evidence="1">
        <text>L-homoserine + acetyl-CoA = O-acetyl-L-homoserine + CoA</text>
        <dbReference type="Rhea" id="RHEA:13701"/>
        <dbReference type="ChEBI" id="CHEBI:57287"/>
        <dbReference type="ChEBI" id="CHEBI:57288"/>
        <dbReference type="ChEBI" id="CHEBI:57476"/>
        <dbReference type="ChEBI" id="CHEBI:57716"/>
        <dbReference type="EC" id="2.3.1.31"/>
    </reaction>
</comment>
<comment type="pathway">
    <text evidence="1">Amino-acid biosynthesis; L-methionine biosynthesis via de novo pathway; O-acetyl-L-homoserine from L-homoserine: step 1/1.</text>
</comment>
<comment type="subunit">
    <text evidence="1">Homodimer.</text>
</comment>
<comment type="subcellular location">
    <subcellularLocation>
        <location evidence="1">Cytoplasm</location>
    </subcellularLocation>
</comment>
<comment type="similarity">
    <text evidence="1">Belongs to the AB hydrolase superfamily. MetX family.</text>
</comment>
<organism>
    <name type="scientific">Mesorhizobium japonicum (strain LMG 29417 / CECT 9101 / MAFF 303099)</name>
    <name type="common">Mesorhizobium loti (strain MAFF 303099)</name>
    <dbReference type="NCBI Taxonomy" id="266835"/>
    <lineage>
        <taxon>Bacteria</taxon>
        <taxon>Pseudomonadati</taxon>
        <taxon>Pseudomonadota</taxon>
        <taxon>Alphaproteobacteria</taxon>
        <taxon>Hyphomicrobiales</taxon>
        <taxon>Phyllobacteriaceae</taxon>
        <taxon>Mesorhizobium</taxon>
    </lineage>
</organism>
<keyword id="KW-0012">Acyltransferase</keyword>
<keyword id="KW-0028">Amino-acid biosynthesis</keyword>
<keyword id="KW-0963">Cytoplasm</keyword>
<keyword id="KW-0486">Methionine biosynthesis</keyword>
<keyword id="KW-0808">Transferase</keyword>
<sequence>MAALRAGKTNNEADQPSSPVLRFGADKPLKLDAGTLLSPFQIAYQTYGTLNDARSNAILVCHALTGDQHVANTNPVTGKPGWWEVLIGPGRIIDTNRFFVICSNVIGGCLGSTGPASTNPATGKPYGLDLPVITIRDMVRAQQMLIDHFGIEKLFCVLGGSMGGMQVLEWASSYPERVFSALPIATGARHSSQNIAFHEVGRQAVMADPDWHGGKYFENGKRPEKGLAVARMAAHITYLSEAALHRKFGRNLQDREALTFGFDADFQIESYLRHQGMTFVDRFDANSYLYMTRSMDYFDLAADHGGRLADAFAGTKTRFCLVSFTSDWLFPTEESRSIVHALNAAGASVSFVEIETDRGHDAFLLDEPELFAAINGFIGSAARARGLSA</sequence>
<evidence type="ECO:0000255" key="1">
    <source>
        <dbReference type="HAMAP-Rule" id="MF_00296"/>
    </source>
</evidence>
<evidence type="ECO:0000256" key="2">
    <source>
        <dbReference type="SAM" id="MobiDB-lite"/>
    </source>
</evidence>
<accession>Q98G09</accession>
<gene>
    <name evidence="1" type="primary">metXA</name>
    <name type="ordered locus">mlr3538</name>
</gene>
<feature type="chain" id="PRO_0000155741" description="Homoserine O-acetyltransferase">
    <location>
        <begin position="1"/>
        <end position="389"/>
    </location>
</feature>
<feature type="domain" description="AB hydrolase-1" evidence="1">
    <location>
        <begin position="56"/>
        <end position="366"/>
    </location>
</feature>
<feature type="region of interest" description="Disordered" evidence="2">
    <location>
        <begin position="1"/>
        <end position="21"/>
    </location>
</feature>
<feature type="compositionally biased region" description="Polar residues" evidence="2">
    <location>
        <begin position="8"/>
        <end position="18"/>
    </location>
</feature>
<feature type="active site" description="Nucleophile" evidence="1">
    <location>
        <position position="161"/>
    </location>
</feature>
<feature type="active site" evidence="1">
    <location>
        <position position="327"/>
    </location>
</feature>
<feature type="active site" evidence="1">
    <location>
        <position position="360"/>
    </location>
</feature>
<feature type="binding site" evidence="1">
    <location>
        <position position="231"/>
    </location>
    <ligand>
        <name>substrate</name>
    </ligand>
</feature>
<feature type="binding site" evidence="1">
    <location>
        <position position="361"/>
    </location>
    <ligand>
        <name>substrate</name>
    </ligand>
</feature>
<name>METXA_RHILO</name>